<comment type="subunit">
    <text evidence="1">Homotetramer.</text>
</comment>
<organism>
    <name type="scientific">Chlamydia caviae (strain ATCC VR-813 / DSM 19441 / 03DC25 / GPIC)</name>
    <name type="common">Chlamydophila caviae</name>
    <dbReference type="NCBI Taxonomy" id="227941"/>
    <lineage>
        <taxon>Bacteria</taxon>
        <taxon>Pseudomonadati</taxon>
        <taxon>Chlamydiota</taxon>
        <taxon>Chlamydiia</taxon>
        <taxon>Chlamydiales</taxon>
        <taxon>Chlamydiaceae</taxon>
        <taxon>Chlamydia/Chlamydophila group</taxon>
        <taxon>Chlamydia</taxon>
    </lineage>
</organism>
<accession>Q823K0</accession>
<dbReference type="EMBL" id="AE015925">
    <property type="protein sequence ID" value="AAP05156.1"/>
    <property type="molecule type" value="Genomic_DNA"/>
</dbReference>
<dbReference type="RefSeq" id="WP_011006372.1">
    <property type="nucleotide sequence ID" value="NC_003361.3"/>
</dbReference>
<dbReference type="SMR" id="Q823K0"/>
<dbReference type="STRING" id="227941.CCA_00410"/>
<dbReference type="KEGG" id="cca:CCA_00410"/>
<dbReference type="eggNOG" id="COG0629">
    <property type="taxonomic scope" value="Bacteria"/>
</dbReference>
<dbReference type="HOGENOM" id="CLU_1666266_0_0_0"/>
<dbReference type="OrthoDB" id="9809878at2"/>
<dbReference type="Proteomes" id="UP000002193">
    <property type="component" value="Chromosome"/>
</dbReference>
<dbReference type="GO" id="GO:0009295">
    <property type="term" value="C:nucleoid"/>
    <property type="evidence" value="ECO:0007669"/>
    <property type="project" value="TreeGrafter"/>
</dbReference>
<dbReference type="GO" id="GO:0003697">
    <property type="term" value="F:single-stranded DNA binding"/>
    <property type="evidence" value="ECO:0007669"/>
    <property type="project" value="UniProtKB-UniRule"/>
</dbReference>
<dbReference type="GO" id="GO:0006260">
    <property type="term" value="P:DNA replication"/>
    <property type="evidence" value="ECO:0007669"/>
    <property type="project" value="InterPro"/>
</dbReference>
<dbReference type="CDD" id="cd04496">
    <property type="entry name" value="SSB_OBF"/>
    <property type="match status" value="1"/>
</dbReference>
<dbReference type="Gene3D" id="2.40.50.140">
    <property type="entry name" value="Nucleic acid-binding proteins"/>
    <property type="match status" value="1"/>
</dbReference>
<dbReference type="HAMAP" id="MF_00984">
    <property type="entry name" value="SSB"/>
    <property type="match status" value="1"/>
</dbReference>
<dbReference type="InterPro" id="IPR012340">
    <property type="entry name" value="NA-bd_OB-fold"/>
</dbReference>
<dbReference type="InterPro" id="IPR000424">
    <property type="entry name" value="Primosome_PriB/ssb"/>
</dbReference>
<dbReference type="InterPro" id="IPR011344">
    <property type="entry name" value="ssDNA-bd"/>
</dbReference>
<dbReference type="NCBIfam" id="NF004948">
    <property type="entry name" value="PRK06293.1"/>
    <property type="match status" value="1"/>
</dbReference>
<dbReference type="NCBIfam" id="TIGR00621">
    <property type="entry name" value="ssb"/>
    <property type="match status" value="1"/>
</dbReference>
<dbReference type="PANTHER" id="PTHR10302">
    <property type="entry name" value="SINGLE-STRANDED DNA-BINDING PROTEIN"/>
    <property type="match status" value="1"/>
</dbReference>
<dbReference type="PANTHER" id="PTHR10302:SF27">
    <property type="entry name" value="SINGLE-STRANDED DNA-BINDING PROTEIN"/>
    <property type="match status" value="1"/>
</dbReference>
<dbReference type="Pfam" id="PF00436">
    <property type="entry name" value="SSB"/>
    <property type="match status" value="1"/>
</dbReference>
<dbReference type="PIRSF" id="PIRSF002070">
    <property type="entry name" value="SSB"/>
    <property type="match status" value="1"/>
</dbReference>
<dbReference type="SUPFAM" id="SSF50249">
    <property type="entry name" value="Nucleic acid-binding proteins"/>
    <property type="match status" value="1"/>
</dbReference>
<dbReference type="PROSITE" id="PS50935">
    <property type="entry name" value="SSB"/>
    <property type="match status" value="1"/>
</dbReference>
<proteinExistence type="inferred from homology"/>
<evidence type="ECO:0000255" key="1">
    <source>
        <dbReference type="HAMAP-Rule" id="MF_00984"/>
    </source>
</evidence>
<keyword id="KW-0238">DNA-binding</keyword>
<feature type="chain" id="PRO_0000096022" description="Single-stranded DNA-binding protein">
    <location>
        <begin position="1"/>
        <end position="161"/>
    </location>
</feature>
<feature type="domain" description="SSB" evidence="1">
    <location>
        <begin position="1"/>
        <end position="100"/>
    </location>
</feature>
<protein>
    <recommendedName>
        <fullName evidence="1">Single-stranded DNA-binding protein</fullName>
        <shortName evidence="1">SSB</shortName>
    </recommendedName>
</protein>
<gene>
    <name type="primary">ssb</name>
    <name type="ordered locus">CCA_00410</name>
</gene>
<name>SSB_CHLCV</name>
<sequence>MMFGYFVGYLGADPEERMTSKGKRVVVLRLGVKSRIGTKDETVWCKCNVWHNRYDKMLPYLKKGSGVIVAGDISVESYMSKDGTPQSSLVISVDTIKFSPFGRNESRSLSLLEESSAQTTSYDNVSLGFEGESLDAEAIADKDMYAGYGQGQQYVSEDVPF</sequence>
<reference key="1">
    <citation type="journal article" date="2003" name="Nucleic Acids Res.">
        <title>Genome sequence of Chlamydophila caviae (Chlamydia psittaci GPIC): examining the role of niche-specific genes in the evolution of the Chlamydiaceae.</title>
        <authorList>
            <person name="Read T.D."/>
            <person name="Myers G.S.A."/>
            <person name="Brunham R.C."/>
            <person name="Nelson W.C."/>
            <person name="Paulsen I.T."/>
            <person name="Heidelberg J.F."/>
            <person name="Holtzapple E.K."/>
            <person name="Khouri H.M."/>
            <person name="Federova N.B."/>
            <person name="Carty H.A."/>
            <person name="Umayam L.A."/>
            <person name="Haft D.H."/>
            <person name="Peterson J.D."/>
            <person name="Beanan M.J."/>
            <person name="White O."/>
            <person name="Salzberg S.L."/>
            <person name="Hsia R.-C."/>
            <person name="McClarty G."/>
            <person name="Rank R.G."/>
            <person name="Bavoil P.M."/>
            <person name="Fraser C.M."/>
        </authorList>
    </citation>
    <scope>NUCLEOTIDE SEQUENCE [LARGE SCALE GENOMIC DNA]</scope>
    <source>
        <strain>ATCC VR-813 / DSM 19441 / 03DC25 / GPIC</strain>
    </source>
</reference>